<dbReference type="EC" id="2.2.1.6"/>
<dbReference type="EMBL" id="L04470">
    <property type="protein sequence ID" value="AAA22222.1"/>
    <property type="status" value="ALT_FRAME"/>
    <property type="molecule type" value="Genomic_DNA"/>
</dbReference>
<dbReference type="EMBL" id="Z93767">
    <property type="protein sequence ID" value="CAB07802.1"/>
    <property type="status" value="ALT_INIT"/>
    <property type="molecule type" value="Genomic_DNA"/>
</dbReference>
<dbReference type="EMBL" id="AL009126">
    <property type="protein sequence ID" value="CAB15618.2"/>
    <property type="molecule type" value="Genomic_DNA"/>
</dbReference>
<dbReference type="PIR" id="H69584">
    <property type="entry name" value="H69584"/>
</dbReference>
<dbReference type="RefSeq" id="NP_391482.2">
    <property type="nucleotide sequence ID" value="NC_000964.3"/>
</dbReference>
<dbReference type="RefSeq" id="WP_003244057.1">
    <property type="nucleotide sequence ID" value="NZ_OZ025638.1"/>
</dbReference>
<dbReference type="SMR" id="Q04789"/>
<dbReference type="FunCoup" id="Q04789">
    <property type="interactions" value="295"/>
</dbReference>
<dbReference type="STRING" id="224308.BSU36010"/>
<dbReference type="PaxDb" id="224308-BSU36010"/>
<dbReference type="EnsemblBacteria" id="CAB15618">
    <property type="protein sequence ID" value="CAB15618"/>
    <property type="gene ID" value="BSU_36010"/>
</dbReference>
<dbReference type="GeneID" id="936852"/>
<dbReference type="KEGG" id="bsu:BSU36010"/>
<dbReference type="PATRIC" id="fig|224308.179.peg.3898"/>
<dbReference type="eggNOG" id="COG0028">
    <property type="taxonomic scope" value="Bacteria"/>
</dbReference>
<dbReference type="InParanoid" id="Q04789"/>
<dbReference type="OrthoDB" id="4494979at2"/>
<dbReference type="PhylomeDB" id="Q04789"/>
<dbReference type="BioCyc" id="BSUB:BSU36010-MONOMER"/>
<dbReference type="BRENDA" id="2.2.1.6">
    <property type="organism ID" value="658"/>
</dbReference>
<dbReference type="BRENDA" id="4.1.1.72">
    <property type="organism ID" value="658"/>
</dbReference>
<dbReference type="UniPathway" id="UPA00626">
    <property type="reaction ID" value="UER00677"/>
</dbReference>
<dbReference type="Proteomes" id="UP000001570">
    <property type="component" value="Chromosome"/>
</dbReference>
<dbReference type="GO" id="GO:0005948">
    <property type="term" value="C:acetolactate synthase complex"/>
    <property type="evidence" value="ECO:0000318"/>
    <property type="project" value="GO_Central"/>
</dbReference>
<dbReference type="GO" id="GO:0003984">
    <property type="term" value="F:acetolactate synthase activity"/>
    <property type="evidence" value="ECO:0000318"/>
    <property type="project" value="GO_Central"/>
</dbReference>
<dbReference type="GO" id="GO:0050660">
    <property type="term" value="F:flavin adenine dinucleotide binding"/>
    <property type="evidence" value="ECO:0000318"/>
    <property type="project" value="GO_Central"/>
</dbReference>
<dbReference type="GO" id="GO:0000287">
    <property type="term" value="F:magnesium ion binding"/>
    <property type="evidence" value="ECO:0007669"/>
    <property type="project" value="InterPro"/>
</dbReference>
<dbReference type="GO" id="GO:0030976">
    <property type="term" value="F:thiamine pyrophosphate binding"/>
    <property type="evidence" value="ECO:0007669"/>
    <property type="project" value="InterPro"/>
</dbReference>
<dbReference type="GO" id="GO:0045151">
    <property type="term" value="P:acetoin biosynthetic process"/>
    <property type="evidence" value="ECO:0007669"/>
    <property type="project" value="UniProtKB-KW"/>
</dbReference>
<dbReference type="GO" id="GO:0034077">
    <property type="term" value="P:butanediol metabolic process"/>
    <property type="evidence" value="ECO:0007669"/>
    <property type="project" value="InterPro"/>
</dbReference>
<dbReference type="GO" id="GO:0009097">
    <property type="term" value="P:isoleucine biosynthetic process"/>
    <property type="evidence" value="ECO:0000318"/>
    <property type="project" value="GO_Central"/>
</dbReference>
<dbReference type="GO" id="GO:0009099">
    <property type="term" value="P:L-valine biosynthetic process"/>
    <property type="evidence" value="ECO:0000318"/>
    <property type="project" value="GO_Central"/>
</dbReference>
<dbReference type="CDD" id="cd02010">
    <property type="entry name" value="TPP_ALS"/>
    <property type="match status" value="1"/>
</dbReference>
<dbReference type="CDD" id="cd07035">
    <property type="entry name" value="TPP_PYR_POX_like"/>
    <property type="match status" value="1"/>
</dbReference>
<dbReference type="FunFam" id="3.40.50.970:FF:000007">
    <property type="entry name" value="Acetolactate synthase"/>
    <property type="match status" value="1"/>
</dbReference>
<dbReference type="FunFam" id="3.40.50.1220:FF:000028">
    <property type="entry name" value="Acetolactate synthase, catabolic"/>
    <property type="match status" value="1"/>
</dbReference>
<dbReference type="Gene3D" id="3.40.50.970">
    <property type="match status" value="2"/>
</dbReference>
<dbReference type="Gene3D" id="3.40.50.1220">
    <property type="entry name" value="TPP-binding domain"/>
    <property type="match status" value="1"/>
</dbReference>
<dbReference type="InterPro" id="IPR012782">
    <property type="entry name" value="Acetolactate_synth_catblc"/>
</dbReference>
<dbReference type="InterPro" id="IPR029035">
    <property type="entry name" value="DHS-like_NAD/FAD-binding_dom"/>
</dbReference>
<dbReference type="InterPro" id="IPR029061">
    <property type="entry name" value="THDP-binding"/>
</dbReference>
<dbReference type="InterPro" id="IPR012000">
    <property type="entry name" value="Thiamin_PyroP_enz_cen_dom"/>
</dbReference>
<dbReference type="InterPro" id="IPR012001">
    <property type="entry name" value="Thiamin_PyroP_enz_TPP-bd_dom"/>
</dbReference>
<dbReference type="InterPro" id="IPR000399">
    <property type="entry name" value="TPP-bd_CS"/>
</dbReference>
<dbReference type="InterPro" id="IPR045229">
    <property type="entry name" value="TPP_enz"/>
</dbReference>
<dbReference type="InterPro" id="IPR011766">
    <property type="entry name" value="TPP_enzyme_TPP-bd"/>
</dbReference>
<dbReference type="NCBIfam" id="TIGR02418">
    <property type="entry name" value="acolac_catab"/>
    <property type="match status" value="1"/>
</dbReference>
<dbReference type="NCBIfam" id="NF006187">
    <property type="entry name" value="PRK08322.1"/>
    <property type="match status" value="1"/>
</dbReference>
<dbReference type="NCBIfam" id="NF006378">
    <property type="entry name" value="PRK08617.1"/>
    <property type="match status" value="1"/>
</dbReference>
<dbReference type="PANTHER" id="PTHR18968:SF129">
    <property type="entry name" value="ACETOLACTATE SYNTHASE"/>
    <property type="match status" value="1"/>
</dbReference>
<dbReference type="PANTHER" id="PTHR18968">
    <property type="entry name" value="THIAMINE PYROPHOSPHATE ENZYMES"/>
    <property type="match status" value="1"/>
</dbReference>
<dbReference type="Pfam" id="PF02775">
    <property type="entry name" value="TPP_enzyme_C"/>
    <property type="match status" value="1"/>
</dbReference>
<dbReference type="Pfam" id="PF00205">
    <property type="entry name" value="TPP_enzyme_M"/>
    <property type="match status" value="1"/>
</dbReference>
<dbReference type="Pfam" id="PF02776">
    <property type="entry name" value="TPP_enzyme_N"/>
    <property type="match status" value="1"/>
</dbReference>
<dbReference type="SUPFAM" id="SSF52467">
    <property type="entry name" value="DHS-like NAD/FAD-binding domain"/>
    <property type="match status" value="1"/>
</dbReference>
<dbReference type="SUPFAM" id="SSF52518">
    <property type="entry name" value="Thiamin diphosphate-binding fold (THDP-binding)"/>
    <property type="match status" value="2"/>
</dbReference>
<dbReference type="PROSITE" id="PS00187">
    <property type="entry name" value="TPP_ENZYMES"/>
    <property type="match status" value="1"/>
</dbReference>
<gene>
    <name type="primary">alsS</name>
    <name type="ordered locus">BSU36010</name>
</gene>
<protein>
    <recommendedName>
        <fullName>Acetolactate synthase</fullName>
        <ecNumber>2.2.1.6</ecNumber>
    </recommendedName>
    <alternativeName>
        <fullName>ALS</fullName>
    </alternativeName>
    <alternativeName>
        <fullName>Acetohydroxy-acid synthase</fullName>
    </alternativeName>
</protein>
<accession>Q04789</accession>
<accession>O05225</accession>
<proteinExistence type="evidence at transcript level"/>
<evidence type="ECO:0000250" key="1"/>
<evidence type="ECO:0000305" key="2"/>
<name>ILVX_BACSU</name>
<keyword id="KW-0005">Acetoin biosynthesis</keyword>
<keyword id="KW-0274">FAD</keyword>
<keyword id="KW-0285">Flavoprotein</keyword>
<keyword id="KW-0460">Magnesium</keyword>
<keyword id="KW-0479">Metal-binding</keyword>
<keyword id="KW-1185">Reference proteome</keyword>
<keyword id="KW-0786">Thiamine pyrophosphate</keyword>
<keyword id="KW-0808">Transferase</keyword>
<organism>
    <name type="scientific">Bacillus subtilis (strain 168)</name>
    <dbReference type="NCBI Taxonomy" id="224308"/>
    <lineage>
        <taxon>Bacteria</taxon>
        <taxon>Bacillati</taxon>
        <taxon>Bacillota</taxon>
        <taxon>Bacilli</taxon>
        <taxon>Bacillales</taxon>
        <taxon>Bacillaceae</taxon>
        <taxon>Bacillus</taxon>
    </lineage>
</organism>
<comment type="catalytic activity">
    <reaction>
        <text>2 pyruvate + H(+) = (2S)-2-acetolactate + CO2</text>
        <dbReference type="Rhea" id="RHEA:25249"/>
        <dbReference type="ChEBI" id="CHEBI:15361"/>
        <dbReference type="ChEBI" id="CHEBI:15378"/>
        <dbReference type="ChEBI" id="CHEBI:16526"/>
        <dbReference type="ChEBI" id="CHEBI:58476"/>
        <dbReference type="EC" id="2.2.1.6"/>
    </reaction>
</comment>
<comment type="cofactor">
    <cofactor evidence="1">
        <name>Mg(2+)</name>
        <dbReference type="ChEBI" id="CHEBI:18420"/>
    </cofactor>
    <text evidence="1">Binds 1 Mg(2+) ion per subunit.</text>
</comment>
<comment type="cofactor">
    <cofactor evidence="1">
        <name>thiamine diphosphate</name>
        <dbReference type="ChEBI" id="CHEBI:58937"/>
    </cofactor>
    <text evidence="1">Binds 1 thiamine pyrophosphate per subunit.</text>
</comment>
<comment type="pathway">
    <text>Polyol metabolism; (R,R)-butane-2,3-diol biosynthesis; (R,R)-butane-2,3-diol from pyruvate: step 1/3.</text>
</comment>
<comment type="induction">
    <text>Strongly induced under anaerobic conditions. Activated by ResDE, Fnr and ArfM.</text>
</comment>
<comment type="similarity">
    <text evidence="2">Belongs to the TPP enzyme family.</text>
</comment>
<comment type="sequence caution" evidence="2">
    <conflict type="frameshift">
        <sequence resource="EMBL-CDS" id="AAA22222"/>
    </conflict>
</comment>
<comment type="sequence caution" evidence="2">
    <conflict type="erroneous initiation">
        <sequence resource="EMBL-CDS" id="CAB07802"/>
    </conflict>
</comment>
<reference key="1">
    <citation type="journal article" date="1993" name="J. Bacteriol.">
        <title>Regulation of the Bacillus subtilis alsS, alsD, and alsR genes involved in post-exponential-phase production of acetoin.</title>
        <authorList>
            <person name="Renna M.C."/>
            <person name="Najimudin N."/>
            <person name="Winik L.R."/>
            <person name="Zahler S.A."/>
        </authorList>
    </citation>
    <scope>NUCLEOTIDE SEQUENCE [GENOMIC DNA]</scope>
</reference>
<reference key="2">
    <citation type="journal article" date="1997" name="Microbiology">
        <title>The Bacillus subtilis genome from gerBC (311 degrees) to licR (334 degrees).</title>
        <authorList>
            <person name="Presecan E."/>
            <person name="Moszer I."/>
            <person name="Boursier L."/>
            <person name="Cruz Ramos H."/>
            <person name="De La Fuente V."/>
            <person name="Hullo M.-F."/>
            <person name="Lelong C."/>
            <person name="Schleich S."/>
            <person name="Sekowska A."/>
            <person name="Song B.H."/>
            <person name="Villani G."/>
            <person name="Kunst F."/>
            <person name="Danchin A."/>
            <person name="Glaser P."/>
        </authorList>
    </citation>
    <scope>NUCLEOTIDE SEQUENCE [GENOMIC DNA]</scope>
    <source>
        <strain>168</strain>
    </source>
</reference>
<reference key="3">
    <citation type="journal article" date="1997" name="Nature">
        <title>The complete genome sequence of the Gram-positive bacterium Bacillus subtilis.</title>
        <authorList>
            <person name="Kunst F."/>
            <person name="Ogasawara N."/>
            <person name="Moszer I."/>
            <person name="Albertini A.M."/>
            <person name="Alloni G."/>
            <person name="Azevedo V."/>
            <person name="Bertero M.G."/>
            <person name="Bessieres P."/>
            <person name="Bolotin A."/>
            <person name="Borchert S."/>
            <person name="Borriss R."/>
            <person name="Boursier L."/>
            <person name="Brans A."/>
            <person name="Braun M."/>
            <person name="Brignell S.C."/>
            <person name="Bron S."/>
            <person name="Brouillet S."/>
            <person name="Bruschi C.V."/>
            <person name="Caldwell B."/>
            <person name="Capuano V."/>
            <person name="Carter N.M."/>
            <person name="Choi S.-K."/>
            <person name="Codani J.-J."/>
            <person name="Connerton I.F."/>
            <person name="Cummings N.J."/>
            <person name="Daniel R.A."/>
            <person name="Denizot F."/>
            <person name="Devine K.M."/>
            <person name="Duesterhoeft A."/>
            <person name="Ehrlich S.D."/>
            <person name="Emmerson P.T."/>
            <person name="Entian K.-D."/>
            <person name="Errington J."/>
            <person name="Fabret C."/>
            <person name="Ferrari E."/>
            <person name="Foulger D."/>
            <person name="Fritz C."/>
            <person name="Fujita M."/>
            <person name="Fujita Y."/>
            <person name="Fuma S."/>
            <person name="Galizzi A."/>
            <person name="Galleron N."/>
            <person name="Ghim S.-Y."/>
            <person name="Glaser P."/>
            <person name="Goffeau A."/>
            <person name="Golightly E.J."/>
            <person name="Grandi G."/>
            <person name="Guiseppi G."/>
            <person name="Guy B.J."/>
            <person name="Haga K."/>
            <person name="Haiech J."/>
            <person name="Harwood C.R."/>
            <person name="Henaut A."/>
            <person name="Hilbert H."/>
            <person name="Holsappel S."/>
            <person name="Hosono S."/>
            <person name="Hullo M.-F."/>
            <person name="Itaya M."/>
            <person name="Jones L.-M."/>
            <person name="Joris B."/>
            <person name="Karamata D."/>
            <person name="Kasahara Y."/>
            <person name="Klaerr-Blanchard M."/>
            <person name="Klein C."/>
            <person name="Kobayashi Y."/>
            <person name="Koetter P."/>
            <person name="Koningstein G."/>
            <person name="Krogh S."/>
            <person name="Kumano M."/>
            <person name="Kurita K."/>
            <person name="Lapidus A."/>
            <person name="Lardinois S."/>
            <person name="Lauber J."/>
            <person name="Lazarevic V."/>
            <person name="Lee S.-M."/>
            <person name="Levine A."/>
            <person name="Liu H."/>
            <person name="Masuda S."/>
            <person name="Mauel C."/>
            <person name="Medigue C."/>
            <person name="Medina N."/>
            <person name="Mellado R.P."/>
            <person name="Mizuno M."/>
            <person name="Moestl D."/>
            <person name="Nakai S."/>
            <person name="Noback M."/>
            <person name="Noone D."/>
            <person name="O'Reilly M."/>
            <person name="Ogawa K."/>
            <person name="Ogiwara A."/>
            <person name="Oudega B."/>
            <person name="Park S.-H."/>
            <person name="Parro V."/>
            <person name="Pohl T.M."/>
            <person name="Portetelle D."/>
            <person name="Porwollik S."/>
            <person name="Prescott A.M."/>
            <person name="Presecan E."/>
            <person name="Pujic P."/>
            <person name="Purnelle B."/>
            <person name="Rapoport G."/>
            <person name="Rey M."/>
            <person name="Reynolds S."/>
            <person name="Rieger M."/>
            <person name="Rivolta C."/>
            <person name="Rocha E."/>
            <person name="Roche B."/>
            <person name="Rose M."/>
            <person name="Sadaie Y."/>
            <person name="Sato T."/>
            <person name="Scanlan E."/>
            <person name="Schleich S."/>
            <person name="Schroeter R."/>
            <person name="Scoffone F."/>
            <person name="Sekiguchi J."/>
            <person name="Sekowska A."/>
            <person name="Seror S.J."/>
            <person name="Serror P."/>
            <person name="Shin B.-S."/>
            <person name="Soldo B."/>
            <person name="Sorokin A."/>
            <person name="Tacconi E."/>
            <person name="Takagi T."/>
            <person name="Takahashi H."/>
            <person name="Takemaru K."/>
            <person name="Takeuchi M."/>
            <person name="Tamakoshi A."/>
            <person name="Tanaka T."/>
            <person name="Terpstra P."/>
            <person name="Tognoni A."/>
            <person name="Tosato V."/>
            <person name="Uchiyama S."/>
            <person name="Vandenbol M."/>
            <person name="Vannier F."/>
            <person name="Vassarotti A."/>
            <person name="Viari A."/>
            <person name="Wambutt R."/>
            <person name="Wedler E."/>
            <person name="Wedler H."/>
            <person name="Weitzenegger T."/>
            <person name="Winters P."/>
            <person name="Wipat A."/>
            <person name="Yamamoto H."/>
            <person name="Yamane K."/>
            <person name="Yasumoto K."/>
            <person name="Yata K."/>
            <person name="Yoshida K."/>
            <person name="Yoshikawa H.-F."/>
            <person name="Zumstein E."/>
            <person name="Yoshikawa H."/>
            <person name="Danchin A."/>
        </authorList>
    </citation>
    <scope>NUCLEOTIDE SEQUENCE [LARGE SCALE GENOMIC DNA]</scope>
    <source>
        <strain>168</strain>
    </source>
</reference>
<reference key="4">
    <citation type="journal article" date="2000" name="J. Bacteriol.">
        <title>Fermentative metabolism of Bacillus subtilis: physiology and regulation of gene expression.</title>
        <authorList>
            <person name="Cruz Ramos H."/>
            <person name="Hoffmann T."/>
            <person name="Marino M."/>
            <person name="Nedjari H."/>
            <person name="Presecan-Siedel E."/>
            <person name="Dreesen O."/>
            <person name="Glaser P."/>
            <person name="Jahn D."/>
        </authorList>
    </citation>
    <scope>REGULATION</scope>
</reference>
<feature type="chain" id="PRO_0000090799" description="Acetolactate synthase">
    <location>
        <begin position="1"/>
        <end position="570"/>
    </location>
</feature>
<feature type="region of interest" description="Thiamine pyrophosphate binding">
    <location>
        <begin position="399"/>
        <end position="479"/>
    </location>
</feature>
<feature type="binding site" evidence="1">
    <location>
        <position position="60"/>
    </location>
    <ligand>
        <name>thiamine diphosphate</name>
        <dbReference type="ChEBI" id="CHEBI:58937"/>
    </ligand>
</feature>
<feature type="binding site" evidence="1">
    <location>
        <position position="162"/>
    </location>
    <ligand>
        <name>FAD</name>
        <dbReference type="ChEBI" id="CHEBI:57692"/>
    </ligand>
</feature>
<feature type="binding site" evidence="1">
    <location>
        <begin position="266"/>
        <end position="287"/>
    </location>
    <ligand>
        <name>FAD</name>
        <dbReference type="ChEBI" id="CHEBI:57692"/>
    </ligand>
</feature>
<feature type="binding site" evidence="1">
    <location>
        <begin position="308"/>
        <end position="327"/>
    </location>
    <ligand>
        <name>FAD</name>
        <dbReference type="ChEBI" id="CHEBI:57692"/>
    </ligand>
</feature>
<feature type="binding site" evidence="1">
    <location>
        <position position="450"/>
    </location>
    <ligand>
        <name>Mg(2+)</name>
        <dbReference type="ChEBI" id="CHEBI:18420"/>
    </ligand>
</feature>
<feature type="sequence conflict" description="In Ref. 1; AAA22222." evidence="2" ref="1">
    <original>D</original>
    <variation>Y</variation>
    <location>
        <position position="116"/>
    </location>
</feature>
<feature type="sequence conflict" description="In Ref. 1; AAA22222." evidence="2" ref="1">
    <original>A</original>
    <variation>S</variation>
    <location>
        <position position="401"/>
    </location>
</feature>
<feature type="sequence conflict" description="In Ref. 1; AAA22222." evidence="2" ref="1">
    <original>A</original>
    <variation>H</variation>
    <location>
        <position position="484"/>
    </location>
</feature>
<feature type="sequence conflict" description="In Ref. 1; AAA22222." evidence="2" ref="1">
    <original>G</original>
    <variation>A</variation>
    <location>
        <position position="515"/>
    </location>
</feature>
<sequence length="570" mass="62004">MTKATKEQKSLVKNRGAELVVDCLVEQGVTHVFGIPGAKIDAVFDALQDKGPEIIVARHEQNAAFMAQAVGRLTGKPGVVLVTSGPGASNLATGLLTANTEGDPVVALAGNVIRADRLKRTHQSLDNAALFQPITKYSVEVQDVKNIPEAVTNAFRIASAGQAGAAFVSFPQDVVNEVTNTKNVRAVAAPKLGPAADDAISAAIAKIQTAKLPVVLVGMKGGRPEAIKAVRKLLKKVQLPFVETYQAAGTLSRDLEDQYFGRIGLFRNQPGDLLLEQADVVLTIGYDPIEYDPKFWNINGDRTIIHLDEIIADIDHAYQPDLELIGDIPSTINHIEHDAVKVEFAEREQKILSDLKQYMHEGEQVPADWKSDRAHPLEIVKELRNAVDDHVTVTCDIGSHAIWMSRYFRSYEPLTLMISNGMQTLGVALPWAIGASLVKPGEKVVSVSGDGGFLFSAMELETAVRLKAPIVHIVWNDSTYDMVAFQQLKKYNRTSAVDFGNIDIVKYAESFGATGLRVESPDQLADVLRQGMNAEGPVIIDVPVDYSDNINLASDKLPKEFGELMKTKAL</sequence>